<feature type="chain" id="PRO_0000193832" description="Coatomer subunit zeta-2">
    <location>
        <begin position="1"/>
        <end position="205"/>
    </location>
</feature>
<feature type="region of interest" description="Disordered" evidence="3">
    <location>
        <begin position="1"/>
        <end position="33"/>
    </location>
</feature>
<feature type="compositionally biased region" description="Basic and acidic residues" evidence="3">
    <location>
        <begin position="1"/>
        <end position="12"/>
    </location>
</feature>
<feature type="compositionally biased region" description="Low complexity" evidence="3">
    <location>
        <begin position="13"/>
        <end position="30"/>
    </location>
</feature>
<sequence>MQRPEAWPRPHPGEGASAAQAGGAAPPTRATEQREPSLYTIKAVFILDNDGRRLLAKYYDDTFPSVKEQMVFEKNVFNKTSRTESEIAFLGGMTIVYKSSIDIFLYVVGSSSENELMLMSVLACLFDSLSHILRKNVEKRWLLENMDGAFLVLDETVDGGVILESDPQQVIQKVNFRTDDSGLTEQSVAQVLQSAKEQIKWSLLK</sequence>
<dbReference type="EMBL" id="AB047850">
    <property type="protein sequence ID" value="BAB17661.1"/>
    <property type="molecule type" value="mRNA"/>
</dbReference>
<dbReference type="EMBL" id="AB040137">
    <property type="protein sequence ID" value="BAA92831.1"/>
    <property type="molecule type" value="mRNA"/>
</dbReference>
<dbReference type="EMBL" id="AF237687">
    <property type="protein sequence ID" value="AAF37723.1"/>
    <property type="molecule type" value="mRNA"/>
</dbReference>
<dbReference type="EMBL" id="AL596384">
    <property type="status" value="NOT_ANNOTATED_CDS"/>
    <property type="molecule type" value="Genomic_DNA"/>
</dbReference>
<dbReference type="EMBL" id="BC025122">
    <property type="protein sequence ID" value="AAH25122.1"/>
    <property type="molecule type" value="mRNA"/>
</dbReference>
<dbReference type="CCDS" id="CCDS25305.1"/>
<dbReference type="RefSeq" id="NP_063930.1">
    <property type="nucleotide sequence ID" value="NM_019877.2"/>
</dbReference>
<dbReference type="SMR" id="Q9JHH9"/>
<dbReference type="BioGRID" id="207922">
    <property type="interactions" value="1"/>
</dbReference>
<dbReference type="FunCoup" id="Q9JHH9">
    <property type="interactions" value="190"/>
</dbReference>
<dbReference type="STRING" id="10090.ENSMUSP00000018816"/>
<dbReference type="PhosphoSitePlus" id="Q9JHH9"/>
<dbReference type="PaxDb" id="10090-ENSMUSP00000018816"/>
<dbReference type="PeptideAtlas" id="Q9JHH9"/>
<dbReference type="ProteomicsDB" id="284089"/>
<dbReference type="Pumba" id="Q9JHH9"/>
<dbReference type="Antibodypedia" id="53378">
    <property type="antibodies" value="60 antibodies from 15 providers"/>
</dbReference>
<dbReference type="DNASU" id="56358"/>
<dbReference type="Ensembl" id="ENSMUST00000018816.14">
    <property type="protein sequence ID" value="ENSMUSP00000018816.8"/>
    <property type="gene ID" value="ENSMUSG00000018672.16"/>
</dbReference>
<dbReference type="GeneID" id="56358"/>
<dbReference type="KEGG" id="mmu:56358"/>
<dbReference type="UCSC" id="uc007lcu.1">
    <property type="organism name" value="mouse"/>
</dbReference>
<dbReference type="AGR" id="MGI:1929008"/>
<dbReference type="CTD" id="51226"/>
<dbReference type="MGI" id="MGI:1929008">
    <property type="gene designation" value="Copz2"/>
</dbReference>
<dbReference type="VEuPathDB" id="HostDB:ENSMUSG00000018672"/>
<dbReference type="eggNOG" id="KOG3343">
    <property type="taxonomic scope" value="Eukaryota"/>
</dbReference>
<dbReference type="GeneTree" id="ENSGT00390000004405"/>
<dbReference type="HOGENOM" id="CLU_086803_2_0_1"/>
<dbReference type="InParanoid" id="Q9JHH9"/>
<dbReference type="OMA" id="MNCLFES"/>
<dbReference type="OrthoDB" id="10249988at2759"/>
<dbReference type="PhylomeDB" id="Q9JHH9"/>
<dbReference type="TreeFam" id="TF300262"/>
<dbReference type="Reactome" id="R-MMU-6807878">
    <property type="pathway name" value="COPI-mediated anterograde transport"/>
</dbReference>
<dbReference type="Reactome" id="R-MMU-6811434">
    <property type="pathway name" value="COPI-dependent Golgi-to-ER retrograde traffic"/>
</dbReference>
<dbReference type="BioGRID-ORCS" id="56358">
    <property type="hits" value="4 hits in 77 CRISPR screens"/>
</dbReference>
<dbReference type="ChiTaRS" id="Copz2">
    <property type="organism name" value="mouse"/>
</dbReference>
<dbReference type="PRO" id="PR:Q9JHH9"/>
<dbReference type="Proteomes" id="UP000000589">
    <property type="component" value="Chromosome 11"/>
</dbReference>
<dbReference type="RNAct" id="Q9JHH9">
    <property type="molecule type" value="protein"/>
</dbReference>
<dbReference type="Bgee" id="ENSMUSG00000018672">
    <property type="expression patterns" value="Expressed in prostate gland ventral lobe and 212 other cell types or tissues"/>
</dbReference>
<dbReference type="ExpressionAtlas" id="Q9JHH9">
    <property type="expression patterns" value="baseline and differential"/>
</dbReference>
<dbReference type="GO" id="GO:0030126">
    <property type="term" value="C:COPI vesicle coat"/>
    <property type="evidence" value="ECO:0000266"/>
    <property type="project" value="MGI"/>
</dbReference>
<dbReference type="GO" id="GO:0030137">
    <property type="term" value="C:COPI-coated vesicle"/>
    <property type="evidence" value="ECO:0000250"/>
    <property type="project" value="MGI"/>
</dbReference>
<dbReference type="GO" id="GO:0005829">
    <property type="term" value="C:cytosol"/>
    <property type="evidence" value="ECO:0007669"/>
    <property type="project" value="UniProtKB-SubCell"/>
</dbReference>
<dbReference type="GO" id="GO:0033116">
    <property type="term" value="C:endoplasmic reticulum-Golgi intermediate compartment membrane"/>
    <property type="evidence" value="ECO:0007669"/>
    <property type="project" value="UniProtKB-SubCell"/>
</dbReference>
<dbReference type="GO" id="GO:0000139">
    <property type="term" value="C:Golgi membrane"/>
    <property type="evidence" value="ECO:0007669"/>
    <property type="project" value="UniProtKB-SubCell"/>
</dbReference>
<dbReference type="GO" id="GO:0015031">
    <property type="term" value="P:protein transport"/>
    <property type="evidence" value="ECO:0007669"/>
    <property type="project" value="UniProtKB-KW"/>
</dbReference>
<dbReference type="GO" id="GO:0006890">
    <property type="term" value="P:retrograde vesicle-mediated transport, Golgi to endoplasmic reticulum"/>
    <property type="evidence" value="ECO:0007669"/>
    <property type="project" value="InterPro"/>
</dbReference>
<dbReference type="CDD" id="cd14829">
    <property type="entry name" value="Zeta-COP"/>
    <property type="match status" value="1"/>
</dbReference>
<dbReference type="FunFam" id="3.30.450.60:FF:000008">
    <property type="entry name" value="Coatomer subunit zeta-1 isoform 1"/>
    <property type="match status" value="1"/>
</dbReference>
<dbReference type="Gene3D" id="3.30.450.60">
    <property type="match status" value="1"/>
</dbReference>
<dbReference type="InterPro" id="IPR022775">
    <property type="entry name" value="AP_mu_sigma_su"/>
</dbReference>
<dbReference type="InterPro" id="IPR039652">
    <property type="entry name" value="Coatomer_zeta"/>
</dbReference>
<dbReference type="InterPro" id="IPR011012">
    <property type="entry name" value="Longin-like_dom_sf"/>
</dbReference>
<dbReference type="PANTHER" id="PTHR11043:SF4">
    <property type="entry name" value="COATOMER SUBUNIT ZETA-2"/>
    <property type="match status" value="1"/>
</dbReference>
<dbReference type="PANTHER" id="PTHR11043">
    <property type="entry name" value="ZETA-COAT PROTEIN"/>
    <property type="match status" value="1"/>
</dbReference>
<dbReference type="Pfam" id="PF01217">
    <property type="entry name" value="Clat_adaptor_s"/>
    <property type="match status" value="1"/>
</dbReference>
<dbReference type="SUPFAM" id="SSF64356">
    <property type="entry name" value="SNARE-like"/>
    <property type="match status" value="1"/>
</dbReference>
<proteinExistence type="evidence at protein level"/>
<protein>
    <recommendedName>
        <fullName>Coatomer subunit zeta-2</fullName>
    </recommendedName>
    <alternativeName>
        <fullName>Zeta-2-coat protein</fullName>
        <shortName>Zeta-2 COP</shortName>
    </alternativeName>
</protein>
<organism>
    <name type="scientific">Mus musculus</name>
    <name type="common">Mouse</name>
    <dbReference type="NCBI Taxonomy" id="10090"/>
    <lineage>
        <taxon>Eukaryota</taxon>
        <taxon>Metazoa</taxon>
        <taxon>Chordata</taxon>
        <taxon>Craniata</taxon>
        <taxon>Vertebrata</taxon>
        <taxon>Euteleostomi</taxon>
        <taxon>Mammalia</taxon>
        <taxon>Eutheria</taxon>
        <taxon>Euarchontoglires</taxon>
        <taxon>Glires</taxon>
        <taxon>Rodentia</taxon>
        <taxon>Myomorpha</taxon>
        <taxon>Muroidea</taxon>
        <taxon>Muridae</taxon>
        <taxon>Murinae</taxon>
        <taxon>Mus</taxon>
        <taxon>Mus</taxon>
    </lineage>
</organism>
<keyword id="KW-0963">Cytoplasm</keyword>
<keyword id="KW-0968">Cytoplasmic vesicle</keyword>
<keyword id="KW-0931">ER-Golgi transport</keyword>
<keyword id="KW-0333">Golgi apparatus</keyword>
<keyword id="KW-0472">Membrane</keyword>
<keyword id="KW-0653">Protein transport</keyword>
<keyword id="KW-1185">Reference proteome</keyword>
<keyword id="KW-0813">Transport</keyword>
<reference key="1">
    <citation type="journal article" date="2000" name="J. Biochem.">
        <title>Identification and characterization of novel isoforms of COP I subunits.</title>
        <authorList>
            <person name="Futatsumori M."/>
            <person name="Kasai K."/>
            <person name="Takatsu H."/>
            <person name="Shin H.-W."/>
            <person name="Nakayama K."/>
        </authorList>
    </citation>
    <scope>NUCLEOTIDE SEQUENCE [MRNA]</scope>
</reference>
<reference key="2">
    <citation type="submission" date="2000-03" db="EMBL/GenBank/DDBJ databases">
        <title>Identification of zeta-COP genes from various organisms.</title>
        <authorList>
            <person name="Hahn Y."/>
            <person name="Chung J.H."/>
        </authorList>
    </citation>
    <scope>NUCLEOTIDE SEQUENCE [MRNA]</scope>
</reference>
<reference key="3">
    <citation type="submission" date="2000-02" db="EMBL/GenBank/DDBJ databases">
        <title>Newly identified coatomer subunits reveal multiple COPI complexes in the early secretory pathway.</title>
        <authorList>
            <person name="Whitney J.A."/>
            <person name="Kreis T.E."/>
        </authorList>
    </citation>
    <scope>NUCLEOTIDE SEQUENCE [MRNA]</scope>
</reference>
<reference key="4">
    <citation type="journal article" date="2009" name="PLoS Biol.">
        <title>Lineage-specific biology revealed by a finished genome assembly of the mouse.</title>
        <authorList>
            <person name="Church D.M."/>
            <person name="Goodstadt L."/>
            <person name="Hillier L.W."/>
            <person name="Zody M.C."/>
            <person name="Goldstein S."/>
            <person name="She X."/>
            <person name="Bult C.J."/>
            <person name="Agarwala R."/>
            <person name="Cherry J.L."/>
            <person name="DiCuccio M."/>
            <person name="Hlavina W."/>
            <person name="Kapustin Y."/>
            <person name="Meric P."/>
            <person name="Maglott D."/>
            <person name="Birtle Z."/>
            <person name="Marques A.C."/>
            <person name="Graves T."/>
            <person name="Zhou S."/>
            <person name="Teague B."/>
            <person name="Potamousis K."/>
            <person name="Churas C."/>
            <person name="Place M."/>
            <person name="Herschleb J."/>
            <person name="Runnheim R."/>
            <person name="Forrest D."/>
            <person name="Amos-Landgraf J."/>
            <person name="Schwartz D.C."/>
            <person name="Cheng Z."/>
            <person name="Lindblad-Toh K."/>
            <person name="Eichler E.E."/>
            <person name="Ponting C.P."/>
        </authorList>
    </citation>
    <scope>NUCLEOTIDE SEQUENCE [LARGE SCALE GENOMIC DNA]</scope>
    <source>
        <strain>C57BL/6J</strain>
    </source>
</reference>
<reference key="5">
    <citation type="journal article" date="2004" name="Genome Res.">
        <title>The status, quality, and expansion of the NIH full-length cDNA project: the Mammalian Gene Collection (MGC).</title>
        <authorList>
            <consortium name="The MGC Project Team"/>
        </authorList>
    </citation>
    <scope>NUCLEOTIDE SEQUENCE [LARGE SCALE MRNA]</scope>
    <source>
        <strain>FVB/N</strain>
        <tissue>Salivary gland</tissue>
    </source>
</reference>
<reference key="6">
    <citation type="journal article" date="2007" name="Proc. Natl. Acad. Sci. U.S.A.">
        <title>Differential localization of coatomer complex isoforms within the Golgi apparatus.</title>
        <authorList>
            <person name="Moelleken J."/>
            <person name="Malsam J."/>
            <person name="Betts M.J."/>
            <person name="Movafeghi A."/>
            <person name="Reckmann I."/>
            <person name="Meissner I."/>
            <person name="Hellwig A."/>
            <person name="Russell R.B."/>
            <person name="Sollner T."/>
            <person name="Brugger B."/>
            <person name="Wieland F.T."/>
        </authorList>
    </citation>
    <scope>SUBCELLULAR LOCATION</scope>
</reference>
<reference key="7">
    <citation type="journal article" date="2010" name="Cell">
        <title>A tissue-specific atlas of mouse protein phosphorylation and expression.</title>
        <authorList>
            <person name="Huttlin E.L."/>
            <person name="Jedrychowski M.P."/>
            <person name="Elias J.E."/>
            <person name="Goswami T."/>
            <person name="Rad R."/>
            <person name="Beausoleil S.A."/>
            <person name="Villen J."/>
            <person name="Haas W."/>
            <person name="Sowa M.E."/>
            <person name="Gygi S.P."/>
        </authorList>
    </citation>
    <scope>IDENTIFICATION BY MASS SPECTROMETRY [LARGE SCALE ANALYSIS]</scope>
    <source>
        <tissue>Brown adipose tissue</tissue>
        <tissue>Heart</tissue>
        <tissue>Liver</tissue>
        <tissue>Lung</tissue>
        <tissue>Pancreas</tissue>
        <tissue>Testis</tissue>
    </source>
</reference>
<comment type="function">
    <text evidence="2">The coatomer is a cytosolic protein complex that binds to dilysine motifs and reversibly associates with Golgi non-clathrin-coated vesicles, which further mediate biosynthetic protein transport from the ER, via the Golgi up to the trans Golgi network. Coatomer complex is required for budding from Golgi membranes, and is essential for the retrograde Golgi-to-ER transport of dilysine-tagged proteins. The zeta subunit may be involved in regulating the coat assembly and, hence, the rate of biosynthetic protein transport due to its association-dissociation properties with the coatomer complex.</text>
</comment>
<comment type="subunit">
    <text>Oligomeric complex.</text>
</comment>
<comment type="subcellular location">
    <subcellularLocation>
        <location evidence="4">Cytoplasm</location>
        <location evidence="4">Cytosol</location>
    </subcellularLocation>
    <subcellularLocation>
        <location evidence="1">Endoplasmic reticulum-Golgi intermediate compartment membrane</location>
        <topology evidence="1">Peripheral membrane protein</topology>
        <orientation evidence="1">Cytoplasmic side</orientation>
    </subcellularLocation>
    <subcellularLocation>
        <location evidence="4">Golgi apparatus membrane</location>
        <topology evidence="4">Peripheral membrane protein</topology>
        <orientation evidence="4">Cytoplasmic side</orientation>
    </subcellularLocation>
    <subcellularLocation>
        <location evidence="1">Cytoplasmic vesicle</location>
        <location evidence="1">COPI-coated vesicle membrane</location>
        <topology evidence="1">Peripheral membrane protein</topology>
        <orientation evidence="1">Cytoplasmic side</orientation>
    </subcellularLocation>
    <text evidence="1">The coatomer is cytoplasmic or polymerized on the cytoplasmic side of the Golgi, as well as on the vesicles/buds originating from it. Shows a significant preference for ERGIC and cis-Golgi apparatus compared with trans-Golgi network.</text>
</comment>
<comment type="similarity">
    <text evidence="5">Belongs to the adaptor complexes small subunit family.</text>
</comment>
<name>COPZ2_MOUSE</name>
<gene>
    <name type="primary">Copz2</name>
</gene>
<evidence type="ECO:0000250" key="1"/>
<evidence type="ECO:0000250" key="2">
    <source>
        <dbReference type="UniProtKB" id="P53600"/>
    </source>
</evidence>
<evidence type="ECO:0000256" key="3">
    <source>
        <dbReference type="SAM" id="MobiDB-lite"/>
    </source>
</evidence>
<evidence type="ECO:0000269" key="4">
    <source>
    </source>
</evidence>
<evidence type="ECO:0000305" key="5"/>
<accession>Q9JHH9</accession>
<accession>A2A6D6</accession>